<keyword id="KW-1015">Disulfide bond</keyword>
<keyword id="KW-0265">Erythrocyte maturation</keyword>
<keyword id="KW-0325">Glycoprotein</keyword>
<keyword id="KW-0372">Hormone</keyword>
<keyword id="KW-1185">Reference proteome</keyword>
<keyword id="KW-0964">Secreted</keyword>
<keyword id="KW-0732">Signal</keyword>
<accession>Q9GKA2</accession>
<accession>Q9GKA3</accession>
<protein>
    <recommendedName>
        <fullName>Erythropoietin</fullName>
    </recommendedName>
</protein>
<proteinExistence type="evidence at transcript level"/>
<organism>
    <name type="scientific">Oryctolagus cuniculus</name>
    <name type="common">Rabbit</name>
    <dbReference type="NCBI Taxonomy" id="9986"/>
    <lineage>
        <taxon>Eukaryota</taxon>
        <taxon>Metazoa</taxon>
        <taxon>Chordata</taxon>
        <taxon>Craniata</taxon>
        <taxon>Vertebrata</taxon>
        <taxon>Euteleostomi</taxon>
        <taxon>Mammalia</taxon>
        <taxon>Eutheria</taxon>
        <taxon>Euarchontoglires</taxon>
        <taxon>Glires</taxon>
        <taxon>Lagomorpha</taxon>
        <taxon>Leporidae</taxon>
        <taxon>Oryctolagus</taxon>
    </lineage>
</organism>
<feature type="signal peptide" evidence="3">
    <location>
        <begin position="1"/>
        <end position="28"/>
    </location>
</feature>
<feature type="chain" id="PRO_0000008407" description="Erythropoietin">
    <location>
        <begin position="29"/>
        <end position="195"/>
    </location>
</feature>
<feature type="glycosylation site" description="N-linked (GlcNAc...) asparagine" evidence="3">
    <location>
        <position position="52"/>
    </location>
</feature>
<feature type="glycosylation site" description="N-linked (GlcNAc...) asparagine" evidence="3">
    <location>
        <position position="66"/>
    </location>
</feature>
<feature type="glycosylation site" description="N-linked (GlcNAc...) asparagine" evidence="3">
    <location>
        <position position="111"/>
    </location>
</feature>
<feature type="disulfide bond" evidence="1">
    <location>
        <begin position="35"/>
        <end position="190"/>
    </location>
</feature>
<feature type="disulfide bond" evidence="1">
    <location>
        <begin position="57"/>
        <end position="61"/>
    </location>
</feature>
<feature type="sequence conflict" description="In Ref. 1; AAG36962." evidence="4" ref="1">
    <original>V</original>
    <variation>A</variation>
    <location>
        <position position="3"/>
    </location>
</feature>
<reference key="1">
    <citation type="journal article" date="2001" name="Biochem. Biophys. Res. Commun.">
        <title>Rabbit EPO gene and cDNA: expression of rabbit EPO after intramuscular injection of pDNA.</title>
        <authorList>
            <person name="Vilalta A."/>
            <person name="Wu D."/>
            <person name="Margalith M."/>
            <person name="Hobart P."/>
        </authorList>
    </citation>
    <scope>NUCLEOTIDE SEQUENCE [GENOMIC DNA / MRNA]</scope>
    <source>
        <strain>New Zealand white</strain>
        <tissue>Kidney</tissue>
    </source>
</reference>
<evidence type="ECO:0000250" key="1"/>
<evidence type="ECO:0000250" key="2">
    <source>
        <dbReference type="UniProtKB" id="P01588"/>
    </source>
</evidence>
<evidence type="ECO:0000255" key="3"/>
<evidence type="ECO:0000305" key="4"/>
<gene>
    <name type="primary">EPO</name>
</gene>
<comment type="function">
    <text evidence="2">Hormone involved in the regulation of erythrocyte proliferation and differentiation and the maintenance of a physiological level of circulating erythrocyte mass. Binds to EPOR leading to EPOR dimerization and JAK2 activation thereby activating specific downstream effectors, including STAT1 and STAT3.</text>
</comment>
<comment type="subcellular location">
    <subcellularLocation>
        <location>Secreted</location>
    </subcellularLocation>
</comment>
<comment type="similarity">
    <text evidence="4">Belongs to the EPO/TPO family.</text>
</comment>
<dbReference type="EMBL" id="AF290943">
    <property type="protein sequence ID" value="AAG36961.1"/>
    <property type="molecule type" value="mRNA"/>
</dbReference>
<dbReference type="EMBL" id="AF290944">
    <property type="protein sequence ID" value="AAG36962.1"/>
    <property type="molecule type" value="Genomic_DNA"/>
</dbReference>
<dbReference type="PIR" id="JC7699">
    <property type="entry name" value="JC7699"/>
</dbReference>
<dbReference type="RefSeq" id="NP_001075559.1">
    <property type="nucleotide sequence ID" value="NM_001082090.1"/>
</dbReference>
<dbReference type="SMR" id="Q9GKA2"/>
<dbReference type="FunCoup" id="Q9GKA2">
    <property type="interactions" value="9"/>
</dbReference>
<dbReference type="STRING" id="9986.ENSOCUP00000004681"/>
<dbReference type="GlyCosmos" id="Q9GKA2">
    <property type="glycosylation" value="3 sites, No reported glycans"/>
</dbReference>
<dbReference type="PaxDb" id="9986-ENSOCUP00000004681"/>
<dbReference type="GeneID" id="100008786"/>
<dbReference type="KEGG" id="ocu:100008786"/>
<dbReference type="CTD" id="2056"/>
<dbReference type="eggNOG" id="ENOG502RXRC">
    <property type="taxonomic scope" value="Eukaryota"/>
</dbReference>
<dbReference type="InParanoid" id="Q9GKA2"/>
<dbReference type="OrthoDB" id="9892121at2759"/>
<dbReference type="Proteomes" id="UP000001811">
    <property type="component" value="Unplaced"/>
</dbReference>
<dbReference type="GO" id="GO:0005615">
    <property type="term" value="C:extracellular space"/>
    <property type="evidence" value="ECO:0007669"/>
    <property type="project" value="TreeGrafter"/>
</dbReference>
<dbReference type="GO" id="GO:0005125">
    <property type="term" value="F:cytokine activity"/>
    <property type="evidence" value="ECO:0007669"/>
    <property type="project" value="TreeGrafter"/>
</dbReference>
<dbReference type="GO" id="GO:0005128">
    <property type="term" value="F:erythropoietin receptor binding"/>
    <property type="evidence" value="ECO:0000250"/>
    <property type="project" value="UniProtKB"/>
</dbReference>
<dbReference type="GO" id="GO:0005179">
    <property type="term" value="F:hormone activity"/>
    <property type="evidence" value="ECO:0007669"/>
    <property type="project" value="UniProtKB-KW"/>
</dbReference>
<dbReference type="GO" id="GO:0030295">
    <property type="term" value="F:protein kinase activator activity"/>
    <property type="evidence" value="ECO:0007669"/>
    <property type="project" value="TreeGrafter"/>
</dbReference>
<dbReference type="GO" id="GO:0030218">
    <property type="term" value="P:erythrocyte differentiation"/>
    <property type="evidence" value="ECO:0000250"/>
    <property type="project" value="UniProtKB"/>
</dbReference>
<dbReference type="GO" id="GO:0043249">
    <property type="term" value="P:erythrocyte maturation"/>
    <property type="evidence" value="ECO:0007669"/>
    <property type="project" value="UniProtKB-KW"/>
</dbReference>
<dbReference type="GO" id="GO:0038162">
    <property type="term" value="P:erythropoietin-mediated signaling pathway"/>
    <property type="evidence" value="ECO:0000250"/>
    <property type="project" value="UniProtKB"/>
</dbReference>
<dbReference type="GO" id="GO:0008284">
    <property type="term" value="P:positive regulation of cell population proliferation"/>
    <property type="evidence" value="ECO:0007669"/>
    <property type="project" value="TreeGrafter"/>
</dbReference>
<dbReference type="GO" id="GO:0046579">
    <property type="term" value="P:positive regulation of Ras protein signal transduction"/>
    <property type="evidence" value="ECO:0007669"/>
    <property type="project" value="TreeGrafter"/>
</dbReference>
<dbReference type="FunFam" id="1.20.1250.10:FF:000013">
    <property type="entry name" value="Erythropoietin"/>
    <property type="match status" value="1"/>
</dbReference>
<dbReference type="Gene3D" id="1.20.1250.10">
    <property type="match status" value="1"/>
</dbReference>
<dbReference type="InterPro" id="IPR009079">
    <property type="entry name" value="4_helix_cytokine-like_core"/>
</dbReference>
<dbReference type="InterPro" id="IPR019767">
    <property type="entry name" value="EPO/TPO_CS"/>
</dbReference>
<dbReference type="InterPro" id="IPR001323">
    <property type="entry name" value="EPO_TPO"/>
</dbReference>
<dbReference type="InterPro" id="IPR003013">
    <property type="entry name" value="Erythroptn"/>
</dbReference>
<dbReference type="PANTHER" id="PTHR10370">
    <property type="entry name" value="ERYTHROPOIETIN"/>
    <property type="match status" value="1"/>
</dbReference>
<dbReference type="PANTHER" id="PTHR10370:SF0">
    <property type="entry name" value="ERYTHROPOIETIN"/>
    <property type="match status" value="1"/>
</dbReference>
<dbReference type="Pfam" id="PF00758">
    <property type="entry name" value="EPO_TPO"/>
    <property type="match status" value="1"/>
</dbReference>
<dbReference type="PIRSF" id="PIRSF001951">
    <property type="entry name" value="EPO"/>
    <property type="match status" value="1"/>
</dbReference>
<dbReference type="PRINTS" id="PR00272">
    <property type="entry name" value="ERYTHROPTN"/>
</dbReference>
<dbReference type="SUPFAM" id="SSF47266">
    <property type="entry name" value="4-helical cytokines"/>
    <property type="match status" value="1"/>
</dbReference>
<dbReference type="PROSITE" id="PS00817">
    <property type="entry name" value="EPO_TPO"/>
    <property type="match status" value="1"/>
</dbReference>
<sequence length="195" mass="21054">MGVRGRLALLPLALLCLLVLALGLPVLGAPARLICDSRVLERYILEAKEAENVTMGCAEGCSLGENITVPDTKVNFHHWKKSEAGRHAVEVWQGLALLSEAMLRSQALLANSSQLPETLQVHVDKAVSGLRSLTSLLRALGVQKEAVSPPEAASSAAPLRTVAADTLCKLFRIYSNFLRGKLKLYTGEACRRGDR</sequence>
<name>EPO_RABIT</name>